<name>MNMA_WOLTR</name>
<keyword id="KW-0067">ATP-binding</keyword>
<keyword id="KW-0963">Cytoplasm</keyword>
<keyword id="KW-1015">Disulfide bond</keyword>
<keyword id="KW-0547">Nucleotide-binding</keyword>
<keyword id="KW-1185">Reference proteome</keyword>
<keyword id="KW-0694">RNA-binding</keyword>
<keyword id="KW-0808">Transferase</keyword>
<keyword id="KW-0819">tRNA processing</keyword>
<keyword id="KW-0820">tRNA-binding</keyword>
<evidence type="ECO:0000255" key="1">
    <source>
        <dbReference type="HAMAP-Rule" id="MF_00144"/>
    </source>
</evidence>
<evidence type="ECO:0000305" key="2"/>
<reference key="1">
    <citation type="journal article" date="2005" name="PLoS Biol.">
        <title>The Wolbachia genome of Brugia malayi: endosymbiont evolution within a human pathogenic nematode.</title>
        <authorList>
            <person name="Foster J."/>
            <person name="Ganatra M."/>
            <person name="Kamal I."/>
            <person name="Ware J."/>
            <person name="Makarova K."/>
            <person name="Ivanova N."/>
            <person name="Bhattacharyya A."/>
            <person name="Kapatral V."/>
            <person name="Kumar S."/>
            <person name="Posfai J."/>
            <person name="Vincze T."/>
            <person name="Ingram J."/>
            <person name="Moran L."/>
            <person name="Lapidus A."/>
            <person name="Omelchenko M."/>
            <person name="Kyrpides N."/>
            <person name="Ghedin E."/>
            <person name="Wang S."/>
            <person name="Goltsman E."/>
            <person name="Joukov V."/>
            <person name="Ostrovskaya O."/>
            <person name="Tsukerman K."/>
            <person name="Mazur M."/>
            <person name="Comb D."/>
            <person name="Koonin E."/>
            <person name="Slatko B."/>
        </authorList>
    </citation>
    <scope>NUCLEOTIDE SEQUENCE [LARGE SCALE GENOMIC DNA]</scope>
    <source>
        <strain>TRS</strain>
    </source>
</reference>
<gene>
    <name evidence="1" type="primary">mnmA</name>
    <name type="ordered locus">Wbm0155</name>
</gene>
<feature type="chain" id="PRO_0000349855" description="tRNA-specific 2-thiouridylase MnmA">
    <location>
        <begin position="1"/>
        <end position="371"/>
    </location>
</feature>
<feature type="region of interest" description="Interaction with tRNA" evidence="1">
    <location>
        <begin position="166"/>
        <end position="168"/>
    </location>
</feature>
<feature type="active site" description="Nucleophile" evidence="1">
    <location>
        <position position="120"/>
    </location>
</feature>
<feature type="active site" description="Cysteine persulfide intermediate" evidence="1">
    <location>
        <position position="216"/>
    </location>
</feature>
<feature type="binding site" evidence="1">
    <location>
        <begin position="24"/>
        <end position="31"/>
    </location>
    <ligand>
        <name>ATP</name>
        <dbReference type="ChEBI" id="CHEBI:30616"/>
    </ligand>
</feature>
<feature type="binding site" evidence="1">
    <location>
        <position position="50"/>
    </location>
    <ligand>
        <name>ATP</name>
        <dbReference type="ChEBI" id="CHEBI:30616"/>
    </ligand>
</feature>
<feature type="binding site" evidence="1">
    <location>
        <position position="144"/>
    </location>
    <ligand>
        <name>ATP</name>
        <dbReference type="ChEBI" id="CHEBI:30616"/>
    </ligand>
</feature>
<feature type="site" description="Interaction with tRNA" evidence="1">
    <location>
        <position position="145"/>
    </location>
</feature>
<feature type="site" description="Interaction with tRNA" evidence="1">
    <location>
        <position position="353"/>
    </location>
</feature>
<feature type="disulfide bond" description="Alternate" evidence="1">
    <location>
        <begin position="120"/>
        <end position="216"/>
    </location>
</feature>
<protein>
    <recommendedName>
        <fullName evidence="1">tRNA-specific 2-thiouridylase MnmA</fullName>
        <ecNumber evidence="1">2.8.1.13</ecNumber>
    </recommendedName>
</protein>
<dbReference type="EC" id="2.8.1.13" evidence="1"/>
<dbReference type="EMBL" id="AE017321">
    <property type="protein sequence ID" value="AAW70746.1"/>
    <property type="status" value="ALT_INIT"/>
    <property type="molecule type" value="Genomic_DNA"/>
</dbReference>
<dbReference type="RefSeq" id="WP_041571537.1">
    <property type="nucleotide sequence ID" value="NC_006833.1"/>
</dbReference>
<dbReference type="SMR" id="Q5GTC8"/>
<dbReference type="STRING" id="292805.Wbm0155"/>
<dbReference type="KEGG" id="wbm:Wbm0155"/>
<dbReference type="eggNOG" id="COG0482">
    <property type="taxonomic scope" value="Bacteria"/>
</dbReference>
<dbReference type="HOGENOM" id="CLU_035188_0_0_5"/>
<dbReference type="Proteomes" id="UP000000534">
    <property type="component" value="Chromosome"/>
</dbReference>
<dbReference type="GO" id="GO:0005737">
    <property type="term" value="C:cytoplasm"/>
    <property type="evidence" value="ECO:0007669"/>
    <property type="project" value="UniProtKB-SubCell"/>
</dbReference>
<dbReference type="GO" id="GO:0005524">
    <property type="term" value="F:ATP binding"/>
    <property type="evidence" value="ECO:0007669"/>
    <property type="project" value="UniProtKB-KW"/>
</dbReference>
<dbReference type="GO" id="GO:0000049">
    <property type="term" value="F:tRNA binding"/>
    <property type="evidence" value="ECO:0007669"/>
    <property type="project" value="UniProtKB-KW"/>
</dbReference>
<dbReference type="GO" id="GO:0103016">
    <property type="term" value="F:tRNA-uridine 2-sulfurtransferase activity"/>
    <property type="evidence" value="ECO:0007669"/>
    <property type="project" value="UniProtKB-EC"/>
</dbReference>
<dbReference type="GO" id="GO:0002143">
    <property type="term" value="P:tRNA wobble position uridine thiolation"/>
    <property type="evidence" value="ECO:0007669"/>
    <property type="project" value="TreeGrafter"/>
</dbReference>
<dbReference type="CDD" id="cd01998">
    <property type="entry name" value="MnmA_TRMU-like"/>
    <property type="match status" value="1"/>
</dbReference>
<dbReference type="FunFam" id="2.30.30.280:FF:000001">
    <property type="entry name" value="tRNA-specific 2-thiouridylase MnmA"/>
    <property type="match status" value="1"/>
</dbReference>
<dbReference type="FunFam" id="3.40.50.620:FF:000115">
    <property type="entry name" value="tRNA-specific 2-thiouridylase MnmA"/>
    <property type="match status" value="1"/>
</dbReference>
<dbReference type="Gene3D" id="2.30.30.280">
    <property type="entry name" value="Adenine nucleotide alpha hydrolases-like domains"/>
    <property type="match status" value="1"/>
</dbReference>
<dbReference type="Gene3D" id="3.40.50.620">
    <property type="entry name" value="HUPs"/>
    <property type="match status" value="1"/>
</dbReference>
<dbReference type="Gene3D" id="2.40.30.10">
    <property type="entry name" value="Translation factors"/>
    <property type="match status" value="1"/>
</dbReference>
<dbReference type="HAMAP" id="MF_00144">
    <property type="entry name" value="tRNA_thiouridyl_MnmA"/>
    <property type="match status" value="1"/>
</dbReference>
<dbReference type="InterPro" id="IPR004506">
    <property type="entry name" value="MnmA-like"/>
</dbReference>
<dbReference type="InterPro" id="IPR046885">
    <property type="entry name" value="MnmA-like_C"/>
</dbReference>
<dbReference type="InterPro" id="IPR046884">
    <property type="entry name" value="MnmA-like_central"/>
</dbReference>
<dbReference type="InterPro" id="IPR023382">
    <property type="entry name" value="MnmA-like_central_sf"/>
</dbReference>
<dbReference type="InterPro" id="IPR014729">
    <property type="entry name" value="Rossmann-like_a/b/a_fold"/>
</dbReference>
<dbReference type="NCBIfam" id="NF001138">
    <property type="entry name" value="PRK00143.1"/>
    <property type="match status" value="1"/>
</dbReference>
<dbReference type="NCBIfam" id="TIGR00420">
    <property type="entry name" value="trmU"/>
    <property type="match status" value="1"/>
</dbReference>
<dbReference type="PANTHER" id="PTHR11933:SF5">
    <property type="entry name" value="MITOCHONDRIAL TRNA-SPECIFIC 2-THIOURIDYLASE 1"/>
    <property type="match status" value="1"/>
</dbReference>
<dbReference type="PANTHER" id="PTHR11933">
    <property type="entry name" value="TRNA 5-METHYLAMINOMETHYL-2-THIOURIDYLATE -METHYLTRANSFERASE"/>
    <property type="match status" value="1"/>
</dbReference>
<dbReference type="Pfam" id="PF03054">
    <property type="entry name" value="tRNA_Me_trans"/>
    <property type="match status" value="1"/>
</dbReference>
<dbReference type="Pfam" id="PF20258">
    <property type="entry name" value="tRNA_Me_trans_C"/>
    <property type="match status" value="1"/>
</dbReference>
<dbReference type="Pfam" id="PF20259">
    <property type="entry name" value="tRNA_Me_trans_M"/>
    <property type="match status" value="1"/>
</dbReference>
<dbReference type="SUPFAM" id="SSF52402">
    <property type="entry name" value="Adenine nucleotide alpha hydrolases-like"/>
    <property type="match status" value="1"/>
</dbReference>
<accession>Q5GTC8</accession>
<proteinExistence type="inferred from homology"/>
<organism>
    <name type="scientific">Wolbachia sp. subsp. Brugia malayi (strain TRS)</name>
    <dbReference type="NCBI Taxonomy" id="292805"/>
    <lineage>
        <taxon>Bacteria</taxon>
        <taxon>Pseudomonadati</taxon>
        <taxon>Pseudomonadota</taxon>
        <taxon>Alphaproteobacteria</taxon>
        <taxon>Rickettsiales</taxon>
        <taxon>Anaplasmataceae</taxon>
        <taxon>Wolbachieae</taxon>
        <taxon>Wolbachia</taxon>
    </lineage>
</organism>
<sequence length="371" mass="41404">MLKEFEIEPLLKDKVPHQTKAVVAMSGGVDSSVAAVLLHRLGYQVIGVTLQLYGADGNSNTRKKGVCCAGQDIYDAKRVAEGTGFPHYILNYEEIFKKEVIESFAQTYIQGKTPIPCIKCNQTVKFRDLLQVTRNLGADVLITGHYVRRLEKNGEVKLCRGIDKSKDQSYFLFATTKEQLKLLRFPLGGFYKCNVRKLARYFSLPISEKPDSQDICFVSENYSKTIAKLAPQSIQKGKIVDVNGKVLGEHNGIVNFTVGQRKGLGIAYSEPLYVVRINTKNNEIVVGPVNALMQRKILVKELNWLEQPKKGMEVTVKLRSLHSGSLAKIYPAKEQNKAYVILNDDYFSISPGQACVAYKDEQVIGGGWICS</sequence>
<comment type="function">
    <text evidence="1">Catalyzes the 2-thiolation of uridine at the wobble position (U34) of tRNA, leading to the formation of s(2)U34.</text>
</comment>
<comment type="catalytic activity">
    <reaction evidence="1">
        <text>S-sulfanyl-L-cysteinyl-[protein] + uridine(34) in tRNA + AH2 + ATP = 2-thiouridine(34) in tRNA + L-cysteinyl-[protein] + A + AMP + diphosphate + H(+)</text>
        <dbReference type="Rhea" id="RHEA:47032"/>
        <dbReference type="Rhea" id="RHEA-COMP:10131"/>
        <dbReference type="Rhea" id="RHEA-COMP:11726"/>
        <dbReference type="Rhea" id="RHEA-COMP:11727"/>
        <dbReference type="Rhea" id="RHEA-COMP:11728"/>
        <dbReference type="ChEBI" id="CHEBI:13193"/>
        <dbReference type="ChEBI" id="CHEBI:15378"/>
        <dbReference type="ChEBI" id="CHEBI:17499"/>
        <dbReference type="ChEBI" id="CHEBI:29950"/>
        <dbReference type="ChEBI" id="CHEBI:30616"/>
        <dbReference type="ChEBI" id="CHEBI:33019"/>
        <dbReference type="ChEBI" id="CHEBI:61963"/>
        <dbReference type="ChEBI" id="CHEBI:65315"/>
        <dbReference type="ChEBI" id="CHEBI:87170"/>
        <dbReference type="ChEBI" id="CHEBI:456215"/>
        <dbReference type="EC" id="2.8.1.13"/>
    </reaction>
</comment>
<comment type="subcellular location">
    <subcellularLocation>
        <location evidence="1">Cytoplasm</location>
    </subcellularLocation>
</comment>
<comment type="similarity">
    <text evidence="1">Belongs to the MnmA/TRMU family.</text>
</comment>
<comment type="sequence caution" evidence="2">
    <conflict type="erroneous initiation">
        <sequence resource="EMBL-CDS" id="AAW70746"/>
    </conflict>
</comment>